<evidence type="ECO:0000250" key="1">
    <source>
        <dbReference type="UniProtKB" id="Q9DAN6"/>
    </source>
</evidence>
<evidence type="ECO:0000255" key="2">
    <source>
        <dbReference type="PROSITE-ProRule" id="PRU01141"/>
    </source>
</evidence>
<evidence type="ECO:0000305" key="3"/>
<accession>Q3SZU0</accession>
<gene>
    <name type="primary">GTSF1</name>
    <name type="synonym">FAM112B</name>
</gene>
<sequence length="167" mass="19146">MEETYIDTLDPEKLLQCPYDKNHQIRACRFPYHLIKCRKNHPDVANKLATCPFNARHQVPRAEISHHISSCDDKSCIEQDVVNQTRSLGQETMAESTWRCPPCDEDWDKDLWEQTSTPFVWGTANYCGNNSPASNIVMEHKSNLASGMRVPKSLPYVLPWKNNGNAQ</sequence>
<proteinExistence type="evidence at transcript level"/>
<organism>
    <name type="scientific">Bos taurus</name>
    <name type="common">Bovine</name>
    <dbReference type="NCBI Taxonomy" id="9913"/>
    <lineage>
        <taxon>Eukaryota</taxon>
        <taxon>Metazoa</taxon>
        <taxon>Chordata</taxon>
        <taxon>Craniata</taxon>
        <taxon>Vertebrata</taxon>
        <taxon>Euteleostomi</taxon>
        <taxon>Mammalia</taxon>
        <taxon>Eutheria</taxon>
        <taxon>Laurasiatheria</taxon>
        <taxon>Artiodactyla</taxon>
        <taxon>Ruminantia</taxon>
        <taxon>Pecora</taxon>
        <taxon>Bovidae</taxon>
        <taxon>Bovinae</taxon>
        <taxon>Bos</taxon>
    </lineage>
</organism>
<feature type="chain" id="PRO_0000226547" description="Gametocyte-specific factor 1">
    <location>
        <begin position="1"/>
        <end position="167"/>
    </location>
</feature>
<feature type="zinc finger region" description="CHHC U11-48K-type 1" evidence="2">
    <location>
        <begin position="14"/>
        <end position="41"/>
    </location>
</feature>
<feature type="zinc finger region" description="CHHC U11-48K-type 2" evidence="2">
    <location>
        <begin position="48"/>
        <end position="75"/>
    </location>
</feature>
<feature type="binding site" evidence="2">
    <location>
        <position position="17"/>
    </location>
    <ligand>
        <name>Zn(2+)</name>
        <dbReference type="ChEBI" id="CHEBI:29105"/>
        <label>1</label>
    </ligand>
</feature>
<feature type="binding site" evidence="2">
    <location>
        <position position="23"/>
    </location>
    <ligand>
        <name>Zn(2+)</name>
        <dbReference type="ChEBI" id="CHEBI:29105"/>
        <label>1</label>
    </ligand>
</feature>
<feature type="binding site" evidence="2">
    <location>
        <position position="33"/>
    </location>
    <ligand>
        <name>Zn(2+)</name>
        <dbReference type="ChEBI" id="CHEBI:29105"/>
        <label>1</label>
    </ligand>
</feature>
<feature type="binding site" evidence="2">
    <location>
        <position position="37"/>
    </location>
    <ligand>
        <name>Zn(2+)</name>
        <dbReference type="ChEBI" id="CHEBI:29105"/>
        <label>1</label>
    </ligand>
</feature>
<feature type="binding site" evidence="2">
    <location>
        <position position="51"/>
    </location>
    <ligand>
        <name>Zn(2+)</name>
        <dbReference type="ChEBI" id="CHEBI:29105"/>
        <label>2</label>
    </ligand>
</feature>
<feature type="binding site" evidence="2">
    <location>
        <position position="57"/>
    </location>
    <ligand>
        <name>Zn(2+)</name>
        <dbReference type="ChEBI" id="CHEBI:29105"/>
        <label>2</label>
    </ligand>
</feature>
<feature type="binding site" evidence="2">
    <location>
        <position position="67"/>
    </location>
    <ligand>
        <name>Zn(2+)</name>
        <dbReference type="ChEBI" id="CHEBI:29105"/>
        <label>2</label>
    </ligand>
</feature>
<feature type="binding site" evidence="2">
    <location>
        <position position="71"/>
    </location>
    <ligand>
        <name>Zn(2+)</name>
        <dbReference type="ChEBI" id="CHEBI:29105"/>
        <label>2</label>
    </ligand>
</feature>
<comment type="function">
    <text evidence="1">Required for spermatogenesis and is involved in the suppression of retrotransposon transcription in male germ cells.</text>
</comment>
<comment type="subcellular location">
    <subcellularLocation>
        <location evidence="1">Cytoplasm</location>
    </subcellularLocation>
</comment>
<comment type="similarity">
    <text evidence="3">Belongs to the UPF0224 (FAM112) family.</text>
</comment>
<name>GTSF1_BOVIN</name>
<keyword id="KW-0963">Cytoplasm</keyword>
<keyword id="KW-0221">Differentiation</keyword>
<keyword id="KW-0479">Metal-binding</keyword>
<keyword id="KW-1185">Reference proteome</keyword>
<keyword id="KW-0677">Repeat</keyword>
<keyword id="KW-0744">Spermatogenesis</keyword>
<keyword id="KW-0862">Zinc</keyword>
<keyword id="KW-0863">Zinc-finger</keyword>
<dbReference type="EMBL" id="BC102713">
    <property type="protein sequence ID" value="AAI02714.1"/>
    <property type="molecule type" value="mRNA"/>
</dbReference>
<dbReference type="RefSeq" id="NP_001029445.1">
    <property type="nucleotide sequence ID" value="NM_001034273.2"/>
</dbReference>
<dbReference type="RefSeq" id="XP_005206160.1">
    <property type="nucleotide sequence ID" value="XM_005206103.4"/>
</dbReference>
<dbReference type="RefSeq" id="XP_024847263.1">
    <property type="nucleotide sequence ID" value="XM_024991495.2"/>
</dbReference>
<dbReference type="SMR" id="Q3SZU0"/>
<dbReference type="FunCoup" id="Q3SZU0">
    <property type="interactions" value="296"/>
</dbReference>
<dbReference type="STRING" id="9913.ENSBTAP00000044649"/>
<dbReference type="PaxDb" id="9913-ENSBTAP00000044649"/>
<dbReference type="Ensembl" id="ENSBTAT00000047442.2">
    <property type="protein sequence ID" value="ENSBTAP00000044649.1"/>
    <property type="gene ID" value="ENSBTAG00000018085.7"/>
</dbReference>
<dbReference type="GeneID" id="506864"/>
<dbReference type="KEGG" id="bta:506864"/>
<dbReference type="CTD" id="121355"/>
<dbReference type="VEuPathDB" id="HostDB:ENSBTAG00000018085"/>
<dbReference type="VGNC" id="VGNC:29712">
    <property type="gene designation" value="GTSF1"/>
</dbReference>
<dbReference type="eggNOG" id="KOG4376">
    <property type="taxonomic scope" value="Eukaryota"/>
</dbReference>
<dbReference type="GeneTree" id="ENSGT00940000156784"/>
<dbReference type="HOGENOM" id="CLU_108762_0_0_1"/>
<dbReference type="InParanoid" id="Q3SZU0"/>
<dbReference type="OMA" id="TANFCGN"/>
<dbReference type="OrthoDB" id="10069248at2759"/>
<dbReference type="TreeFam" id="TF323837"/>
<dbReference type="Proteomes" id="UP000009136">
    <property type="component" value="Chromosome 5"/>
</dbReference>
<dbReference type="Bgee" id="ENSBTAG00000018085">
    <property type="expression patterns" value="Expressed in oocyte and 48 other cell types or tissues"/>
</dbReference>
<dbReference type="GO" id="GO:0071547">
    <property type="term" value="C:piP-body"/>
    <property type="evidence" value="ECO:0007669"/>
    <property type="project" value="Ensembl"/>
</dbReference>
<dbReference type="GO" id="GO:0000049">
    <property type="term" value="F:tRNA binding"/>
    <property type="evidence" value="ECO:0007669"/>
    <property type="project" value="Ensembl"/>
</dbReference>
<dbReference type="GO" id="GO:0008270">
    <property type="term" value="F:zinc ion binding"/>
    <property type="evidence" value="ECO:0007669"/>
    <property type="project" value="UniProtKB-KW"/>
</dbReference>
<dbReference type="GO" id="GO:0030154">
    <property type="term" value="P:cell differentiation"/>
    <property type="evidence" value="ECO:0007669"/>
    <property type="project" value="UniProtKB-KW"/>
</dbReference>
<dbReference type="GO" id="GO:0140991">
    <property type="term" value="P:piRNA-mediated gene silencing by mRNA destabilization"/>
    <property type="evidence" value="ECO:0007669"/>
    <property type="project" value="Ensembl"/>
</dbReference>
<dbReference type="GO" id="GO:0140965">
    <property type="term" value="P:secondary piRNA processing"/>
    <property type="evidence" value="ECO:0007669"/>
    <property type="project" value="Ensembl"/>
</dbReference>
<dbReference type="GO" id="GO:0007283">
    <property type="term" value="P:spermatogenesis"/>
    <property type="evidence" value="ECO:0007669"/>
    <property type="project" value="UniProtKB-KW"/>
</dbReference>
<dbReference type="InterPro" id="IPR022776">
    <property type="entry name" value="TRM13/UPF0224_CHHC_Znf_dom"/>
</dbReference>
<dbReference type="InterPro" id="IPR051591">
    <property type="entry name" value="UPF0224_FAM112_RNA_Proc"/>
</dbReference>
<dbReference type="InterPro" id="IPR036236">
    <property type="entry name" value="Znf_C2H2_sf"/>
</dbReference>
<dbReference type="PANTHER" id="PTHR21402">
    <property type="entry name" value="GAMETOCYTE SPECIFIC FACTOR 1-RELATED"/>
    <property type="match status" value="1"/>
</dbReference>
<dbReference type="PANTHER" id="PTHR21402:SF9">
    <property type="entry name" value="GAMETOCYTE-SPECIFIC FACTOR 1"/>
    <property type="match status" value="1"/>
</dbReference>
<dbReference type="Pfam" id="PF05253">
    <property type="entry name" value="zf-U11-48K"/>
    <property type="match status" value="2"/>
</dbReference>
<dbReference type="SUPFAM" id="SSF57667">
    <property type="entry name" value="beta-beta-alpha zinc fingers"/>
    <property type="match status" value="1"/>
</dbReference>
<dbReference type="PROSITE" id="PS51800">
    <property type="entry name" value="ZF_CHHC_U11_48K"/>
    <property type="match status" value="2"/>
</dbReference>
<reference key="1">
    <citation type="submission" date="2005-08" db="EMBL/GenBank/DDBJ databases">
        <authorList>
            <consortium name="NIH - Mammalian Gene Collection (MGC) project"/>
        </authorList>
    </citation>
    <scope>NUCLEOTIDE SEQUENCE [LARGE SCALE MRNA]</scope>
    <source>
        <strain>Crossbred X Angus</strain>
        <tissue>Liver</tissue>
    </source>
</reference>
<protein>
    <recommendedName>
        <fullName>Gametocyte-specific factor 1</fullName>
    </recommendedName>
    <alternativeName>
        <fullName>Protein FAM112B</fullName>
    </alternativeName>
</protein>